<proteinExistence type="inferred from homology"/>
<name>GSHAB_STRA3</name>
<organism>
    <name type="scientific">Streptococcus agalactiae serotype III (strain NEM316)</name>
    <dbReference type="NCBI Taxonomy" id="211110"/>
    <lineage>
        <taxon>Bacteria</taxon>
        <taxon>Bacillati</taxon>
        <taxon>Bacillota</taxon>
        <taxon>Bacilli</taxon>
        <taxon>Lactobacillales</taxon>
        <taxon>Streptococcaceae</taxon>
        <taxon>Streptococcus</taxon>
    </lineage>
</organism>
<reference key="1">
    <citation type="journal article" date="2002" name="Mol. Microbiol.">
        <title>Genome sequence of Streptococcus agalactiae, a pathogen causing invasive neonatal disease.</title>
        <authorList>
            <person name="Glaser P."/>
            <person name="Rusniok C."/>
            <person name="Buchrieser C."/>
            <person name="Chevalier F."/>
            <person name="Frangeul L."/>
            <person name="Msadek T."/>
            <person name="Zouine M."/>
            <person name="Couve E."/>
            <person name="Lalioui L."/>
            <person name="Poyart C."/>
            <person name="Trieu-Cuot P."/>
            <person name="Kunst F."/>
        </authorList>
    </citation>
    <scope>NUCLEOTIDE SEQUENCE [LARGE SCALE GENOMIC DNA]</scope>
    <source>
        <strain>NEM316</strain>
    </source>
</reference>
<keyword id="KW-0067">ATP-binding</keyword>
<keyword id="KW-0317">Glutathione biosynthesis</keyword>
<keyword id="KW-0436">Ligase</keyword>
<keyword id="KW-0460">Magnesium</keyword>
<keyword id="KW-0464">Manganese</keyword>
<keyword id="KW-0479">Metal-binding</keyword>
<keyword id="KW-0511">Multifunctional enzyme</keyword>
<keyword id="KW-0547">Nucleotide-binding</keyword>
<sequence>MIIDRLLQRSHSHLPILQATFGLERESLRIHQPTQRVAQTPHPKTLGSRNYHPYIQTDYSEPQLELITPIAKDSQEAIRFLKAISDVAGRSINHDEYLWPLSMPPKVREEDIQIAQLEDAFEYDYRKYLEKTYGKLIQSISGIHYNLGLGQELLTSLFELSQADNAIDFQNQLYMKLSQNFLRYRWLLTYLYGASPVAEEDFLDQKLNNPVRSLRNSHLGYVNHKDIRISYTSLKDYVNDLENAVKSGQLIAEKEFYSPVRLRGSKACRNYLEKGITYLEFRTFDLNPFSPIGITQETVDTVHLFLLALLWIDSSSHIDQDIKEANRLNDLIALSHPLEKLPNQAPVSDLVDAMQSVIQHFNLSPYYQDLLESVKRQIQSPELTVAGQLLEMIEGLSLETFGQRQGQIYHDYAWEAPYALKGYETMELSTQLLLFDVIQKGVNFEVLDEQDQFLKLWHNSHIEYVKNGNMTSKDNYIVPLAMANKVVTKKILDEKHFPTPFGDEFTDRKEALNYFSQIQDKPIVVKPKSTNFGLGISIFKTSANLASYEKAIDIAFTEDSAILVEEYIEGTEYRFFVLEGDCIAVLLRVAANVVGDGIHTISQLVKLKNQNPLRGYDHRSPLEVIELGEVEQLMLEQQGYTVNSIPPEGTKIELRRNSNISTGGDSIDVTNTMDPTYKQLAAEMAEAMGAWVCGVDLIIPNATQAYSKDKKNATCIELNFNPLMYMHTYCQEGPGQSITPRILAKLFPEL</sequence>
<protein>
    <recommendedName>
        <fullName evidence="2">Glutathione biosynthesis bifunctional protein GshAB</fullName>
    </recommendedName>
    <alternativeName>
        <fullName evidence="2">Gamma-GCS-GS</fullName>
        <shortName evidence="2">GCS-GS</shortName>
    </alternativeName>
    <domain>
        <recommendedName>
            <fullName evidence="2">Glutamate--cysteine ligase</fullName>
            <ecNumber evidence="2">6.3.2.2</ecNumber>
        </recommendedName>
        <alternativeName>
            <fullName evidence="2">Gamma-ECS</fullName>
            <shortName evidence="2">GCS</shortName>
        </alternativeName>
        <alternativeName>
            <fullName evidence="2">Gamma-glutamylcysteine synthetase</fullName>
        </alternativeName>
    </domain>
    <domain>
        <recommendedName>
            <fullName evidence="2">Glutathione synthetase</fullName>
            <ecNumber evidence="2">6.3.2.3</ecNumber>
        </recommendedName>
        <alternativeName>
            <fullName evidence="2">GSH synthetase</fullName>
            <shortName evidence="2">GS</shortName>
            <shortName evidence="2">GSH-S</shortName>
            <shortName evidence="2">GSHase</shortName>
        </alternativeName>
        <alternativeName>
            <fullName evidence="2">Glutathione synthase</fullName>
        </alternativeName>
    </domain>
</protein>
<comment type="function">
    <text evidence="2">Synthesizes glutathione from L-glutamate and L-cysteine via gamma-L-glutamyl-L-cysteine.</text>
</comment>
<comment type="catalytic activity">
    <reaction evidence="2">
        <text>L-cysteine + L-glutamate + ATP = gamma-L-glutamyl-L-cysteine + ADP + phosphate + H(+)</text>
        <dbReference type="Rhea" id="RHEA:13285"/>
        <dbReference type="ChEBI" id="CHEBI:15378"/>
        <dbReference type="ChEBI" id="CHEBI:29985"/>
        <dbReference type="ChEBI" id="CHEBI:30616"/>
        <dbReference type="ChEBI" id="CHEBI:35235"/>
        <dbReference type="ChEBI" id="CHEBI:43474"/>
        <dbReference type="ChEBI" id="CHEBI:58173"/>
        <dbReference type="ChEBI" id="CHEBI:456216"/>
        <dbReference type="EC" id="6.3.2.2"/>
    </reaction>
</comment>
<comment type="catalytic activity">
    <reaction evidence="2">
        <text>gamma-L-glutamyl-L-cysteine + glycine + ATP = glutathione + ADP + phosphate + H(+)</text>
        <dbReference type="Rhea" id="RHEA:13557"/>
        <dbReference type="ChEBI" id="CHEBI:15378"/>
        <dbReference type="ChEBI" id="CHEBI:30616"/>
        <dbReference type="ChEBI" id="CHEBI:43474"/>
        <dbReference type="ChEBI" id="CHEBI:57305"/>
        <dbReference type="ChEBI" id="CHEBI:57925"/>
        <dbReference type="ChEBI" id="CHEBI:58173"/>
        <dbReference type="ChEBI" id="CHEBI:456216"/>
        <dbReference type="EC" id="6.3.2.3"/>
    </reaction>
</comment>
<comment type="cofactor">
    <cofactor evidence="1">
        <name>Mg(2+)</name>
        <dbReference type="ChEBI" id="CHEBI:18420"/>
    </cofactor>
    <cofactor evidence="1">
        <name>Mn(2+)</name>
        <dbReference type="ChEBI" id="CHEBI:29035"/>
    </cofactor>
    <text evidence="1">Binds 2 magnesium or manganese ions per subunit.</text>
</comment>
<comment type="pathway">
    <text evidence="2">Sulfur metabolism; glutathione biosynthesis; glutathione from L-cysteine and L-glutamate: step 1/2.</text>
</comment>
<comment type="pathway">
    <text evidence="2">Sulfur metabolism; glutathione biosynthesis; glutathione from L-cysteine and L-glutamate: step 2/2.</text>
</comment>
<comment type="subunit">
    <text evidence="2">Monomer.</text>
</comment>
<comment type="similarity">
    <text evidence="2">In the N-terminal section; belongs to the glutamate--cysteine ligase type 1 family. Type 2 subfamily.</text>
</comment>
<accession>Q8E399</accession>
<evidence type="ECO:0000250" key="1"/>
<evidence type="ECO:0000255" key="2">
    <source>
        <dbReference type="HAMAP-Rule" id="MF_00782"/>
    </source>
</evidence>
<evidence type="ECO:0000256" key="3">
    <source>
        <dbReference type="SAM" id="MobiDB-lite"/>
    </source>
</evidence>
<gene>
    <name evidence="2" type="primary">gshAB</name>
    <name evidence="2" type="synonym">gshF</name>
    <name type="ordered locus">gbs1862</name>
</gene>
<feature type="chain" id="PRO_0000192558" description="Glutathione biosynthesis bifunctional protein GshAB">
    <location>
        <begin position="1"/>
        <end position="750"/>
    </location>
</feature>
<feature type="domain" description="ATP-grasp" evidence="2">
    <location>
        <begin position="489"/>
        <end position="747"/>
    </location>
</feature>
<feature type="region of interest" description="Glutamate--cysteine ligase">
    <location>
        <begin position="1"/>
        <end position="333"/>
    </location>
</feature>
<feature type="region of interest" description="Disordered" evidence="3">
    <location>
        <begin position="32"/>
        <end position="51"/>
    </location>
</feature>
<feature type="binding site" evidence="2">
    <location>
        <begin position="516"/>
        <end position="574"/>
    </location>
    <ligand>
        <name>ATP</name>
        <dbReference type="ChEBI" id="CHEBI:30616"/>
    </ligand>
</feature>
<feature type="binding site" evidence="2">
    <location>
        <position position="696"/>
    </location>
    <ligand>
        <name>Mg(2+)</name>
        <dbReference type="ChEBI" id="CHEBI:18420"/>
        <label>1</label>
    </ligand>
</feature>
<feature type="binding site" evidence="2">
    <location>
        <position position="696"/>
    </location>
    <ligand>
        <name>Mn(2+)</name>
        <dbReference type="ChEBI" id="CHEBI:29035"/>
        <label>1</label>
    </ligand>
</feature>
<feature type="binding site" evidence="2">
    <location>
        <position position="717"/>
    </location>
    <ligand>
        <name>Mg(2+)</name>
        <dbReference type="ChEBI" id="CHEBI:18420"/>
        <label>1</label>
    </ligand>
</feature>
<feature type="binding site" evidence="2">
    <location>
        <position position="717"/>
    </location>
    <ligand>
        <name>Mg(2+)</name>
        <dbReference type="ChEBI" id="CHEBI:18420"/>
        <label>2</label>
    </ligand>
</feature>
<feature type="binding site" evidence="2">
    <location>
        <position position="717"/>
    </location>
    <ligand>
        <name>Mn(2+)</name>
        <dbReference type="ChEBI" id="CHEBI:29035"/>
        <label>1</label>
    </ligand>
</feature>
<feature type="binding site" evidence="2">
    <location>
        <position position="717"/>
    </location>
    <ligand>
        <name>Mn(2+)</name>
        <dbReference type="ChEBI" id="CHEBI:29035"/>
        <label>2</label>
    </ligand>
</feature>
<feature type="binding site" evidence="2">
    <location>
        <position position="719"/>
    </location>
    <ligand>
        <name>Mg(2+)</name>
        <dbReference type="ChEBI" id="CHEBI:18420"/>
        <label>2</label>
    </ligand>
</feature>
<feature type="binding site" evidence="2">
    <location>
        <position position="719"/>
    </location>
    <ligand>
        <name>Mn(2+)</name>
        <dbReference type="ChEBI" id="CHEBI:29035"/>
        <label>2</label>
    </ligand>
</feature>
<dbReference type="EC" id="6.3.2.2" evidence="2"/>
<dbReference type="EC" id="6.3.2.3" evidence="2"/>
<dbReference type="EMBL" id="AL766854">
    <property type="protein sequence ID" value="CAD47521.1"/>
    <property type="molecule type" value="Genomic_DNA"/>
</dbReference>
<dbReference type="RefSeq" id="WP_000582678.1">
    <property type="nucleotide sequence ID" value="NC_004368.1"/>
</dbReference>
<dbReference type="SMR" id="Q8E399"/>
<dbReference type="KEGG" id="san:gbs1862"/>
<dbReference type="eggNOG" id="COG1181">
    <property type="taxonomic scope" value="Bacteria"/>
</dbReference>
<dbReference type="eggNOG" id="COG2918">
    <property type="taxonomic scope" value="Bacteria"/>
</dbReference>
<dbReference type="HOGENOM" id="CLU_020728_1_0_9"/>
<dbReference type="UniPathway" id="UPA00142">
    <property type="reaction ID" value="UER00209"/>
</dbReference>
<dbReference type="UniPathway" id="UPA00142">
    <property type="reaction ID" value="UER00210"/>
</dbReference>
<dbReference type="Proteomes" id="UP000000823">
    <property type="component" value="Chromosome"/>
</dbReference>
<dbReference type="GO" id="GO:0005829">
    <property type="term" value="C:cytosol"/>
    <property type="evidence" value="ECO:0007669"/>
    <property type="project" value="TreeGrafter"/>
</dbReference>
<dbReference type="GO" id="GO:0005524">
    <property type="term" value="F:ATP binding"/>
    <property type="evidence" value="ECO:0007669"/>
    <property type="project" value="UniProtKB-UniRule"/>
</dbReference>
<dbReference type="GO" id="GO:0004357">
    <property type="term" value="F:glutamate-cysteine ligase activity"/>
    <property type="evidence" value="ECO:0007669"/>
    <property type="project" value="UniProtKB-UniRule"/>
</dbReference>
<dbReference type="GO" id="GO:0004363">
    <property type="term" value="F:glutathione synthase activity"/>
    <property type="evidence" value="ECO:0007669"/>
    <property type="project" value="UniProtKB-UniRule"/>
</dbReference>
<dbReference type="GO" id="GO:0046872">
    <property type="term" value="F:metal ion binding"/>
    <property type="evidence" value="ECO:0007669"/>
    <property type="project" value="UniProtKB-KW"/>
</dbReference>
<dbReference type="Gene3D" id="3.30.590.20">
    <property type="match status" value="1"/>
</dbReference>
<dbReference type="Gene3D" id="3.30.470.20">
    <property type="entry name" value="ATP-grasp fold, B domain"/>
    <property type="match status" value="2"/>
</dbReference>
<dbReference type="HAMAP" id="MF_00782">
    <property type="entry name" value="Glut_biosynth"/>
    <property type="match status" value="1"/>
</dbReference>
<dbReference type="InterPro" id="IPR011761">
    <property type="entry name" value="ATP-grasp"/>
</dbReference>
<dbReference type="InterPro" id="IPR014746">
    <property type="entry name" value="Gln_synth/guanido_kin_cat_dom"/>
</dbReference>
<dbReference type="InterPro" id="IPR007370">
    <property type="entry name" value="Glu_cys_ligase"/>
</dbReference>
<dbReference type="InterPro" id="IPR006335">
    <property type="entry name" value="Glut_biosynth"/>
</dbReference>
<dbReference type="InterPro" id="IPR006334">
    <property type="entry name" value="Glut_cys_ligase"/>
</dbReference>
<dbReference type="InterPro" id="IPR040657">
    <property type="entry name" value="GshAB_ATP-grasp"/>
</dbReference>
<dbReference type="InterPro" id="IPR020561">
    <property type="entry name" value="PRibGlycinamid_synth_ATP-grasp"/>
</dbReference>
<dbReference type="NCBIfam" id="TIGR01435">
    <property type="entry name" value="glu_cys_lig_rel"/>
    <property type="match status" value="1"/>
</dbReference>
<dbReference type="NCBIfam" id="NF002688">
    <property type="entry name" value="PRK02471.1"/>
    <property type="match status" value="1"/>
</dbReference>
<dbReference type="PANTHER" id="PTHR38761">
    <property type="entry name" value="GLUTAMATE--CYSTEINE LIGASE"/>
    <property type="match status" value="1"/>
</dbReference>
<dbReference type="PANTHER" id="PTHR38761:SF1">
    <property type="entry name" value="GLUTAMATE--CYSTEINE LIGASE"/>
    <property type="match status" value="1"/>
</dbReference>
<dbReference type="Pfam" id="PF18419">
    <property type="entry name" value="ATP-grasp_6"/>
    <property type="match status" value="1"/>
</dbReference>
<dbReference type="Pfam" id="PF01071">
    <property type="entry name" value="GARS_A"/>
    <property type="match status" value="1"/>
</dbReference>
<dbReference type="Pfam" id="PF04262">
    <property type="entry name" value="Glu_cys_ligase"/>
    <property type="match status" value="1"/>
</dbReference>
<dbReference type="SUPFAM" id="SSF55931">
    <property type="entry name" value="Glutamine synthetase/guanido kinase"/>
    <property type="match status" value="1"/>
</dbReference>
<dbReference type="SUPFAM" id="SSF56059">
    <property type="entry name" value="Glutathione synthetase ATP-binding domain-like"/>
    <property type="match status" value="1"/>
</dbReference>
<dbReference type="PROSITE" id="PS50975">
    <property type="entry name" value="ATP_GRASP"/>
    <property type="match status" value="1"/>
</dbReference>